<name>RL20_ECOSM</name>
<comment type="function">
    <text evidence="1">Binds directly to 23S ribosomal RNA and is necessary for the in vitro assembly process of the 50S ribosomal subunit. It is not involved in the protein synthesizing functions of that subunit.</text>
</comment>
<comment type="similarity">
    <text evidence="1">Belongs to the bacterial ribosomal protein bL20 family.</text>
</comment>
<protein>
    <recommendedName>
        <fullName evidence="1">Large ribosomal subunit protein bL20</fullName>
    </recommendedName>
    <alternativeName>
        <fullName evidence="2">50S ribosomal protein L20</fullName>
    </alternativeName>
</protein>
<gene>
    <name evidence="1" type="primary">rplT</name>
    <name type="ordered locus">EcSMS35_1475</name>
</gene>
<dbReference type="EMBL" id="CP000970">
    <property type="protein sequence ID" value="ACB17613.1"/>
    <property type="molecule type" value="Genomic_DNA"/>
</dbReference>
<dbReference type="RefSeq" id="WP_000124850.1">
    <property type="nucleotide sequence ID" value="NC_010498.1"/>
</dbReference>
<dbReference type="SMR" id="B1LE15"/>
<dbReference type="GeneID" id="98388757"/>
<dbReference type="KEGG" id="ecm:EcSMS35_1475"/>
<dbReference type="HOGENOM" id="CLU_123265_0_1_6"/>
<dbReference type="Proteomes" id="UP000007011">
    <property type="component" value="Chromosome"/>
</dbReference>
<dbReference type="GO" id="GO:1990904">
    <property type="term" value="C:ribonucleoprotein complex"/>
    <property type="evidence" value="ECO:0007669"/>
    <property type="project" value="UniProtKB-KW"/>
</dbReference>
<dbReference type="GO" id="GO:0005840">
    <property type="term" value="C:ribosome"/>
    <property type="evidence" value="ECO:0007669"/>
    <property type="project" value="UniProtKB-KW"/>
</dbReference>
<dbReference type="GO" id="GO:0019843">
    <property type="term" value="F:rRNA binding"/>
    <property type="evidence" value="ECO:0007669"/>
    <property type="project" value="UniProtKB-UniRule"/>
</dbReference>
<dbReference type="GO" id="GO:0003735">
    <property type="term" value="F:structural constituent of ribosome"/>
    <property type="evidence" value="ECO:0007669"/>
    <property type="project" value="InterPro"/>
</dbReference>
<dbReference type="GO" id="GO:0000027">
    <property type="term" value="P:ribosomal large subunit assembly"/>
    <property type="evidence" value="ECO:0007669"/>
    <property type="project" value="UniProtKB-UniRule"/>
</dbReference>
<dbReference type="GO" id="GO:0006412">
    <property type="term" value="P:translation"/>
    <property type="evidence" value="ECO:0007669"/>
    <property type="project" value="InterPro"/>
</dbReference>
<dbReference type="CDD" id="cd07026">
    <property type="entry name" value="Ribosomal_L20"/>
    <property type="match status" value="1"/>
</dbReference>
<dbReference type="FunFam" id="1.10.1900.20:FF:000001">
    <property type="entry name" value="50S ribosomal protein L20"/>
    <property type="match status" value="1"/>
</dbReference>
<dbReference type="Gene3D" id="6.10.160.10">
    <property type="match status" value="1"/>
</dbReference>
<dbReference type="Gene3D" id="1.10.1900.20">
    <property type="entry name" value="Ribosomal protein L20"/>
    <property type="match status" value="1"/>
</dbReference>
<dbReference type="HAMAP" id="MF_00382">
    <property type="entry name" value="Ribosomal_bL20"/>
    <property type="match status" value="1"/>
</dbReference>
<dbReference type="InterPro" id="IPR005813">
    <property type="entry name" value="Ribosomal_bL20"/>
</dbReference>
<dbReference type="InterPro" id="IPR049946">
    <property type="entry name" value="RIBOSOMAL_L20_CS"/>
</dbReference>
<dbReference type="InterPro" id="IPR035566">
    <property type="entry name" value="Ribosomal_protein_bL20_C"/>
</dbReference>
<dbReference type="NCBIfam" id="TIGR01032">
    <property type="entry name" value="rplT_bact"/>
    <property type="match status" value="1"/>
</dbReference>
<dbReference type="PANTHER" id="PTHR10986">
    <property type="entry name" value="39S RIBOSOMAL PROTEIN L20"/>
    <property type="match status" value="1"/>
</dbReference>
<dbReference type="Pfam" id="PF00453">
    <property type="entry name" value="Ribosomal_L20"/>
    <property type="match status" value="1"/>
</dbReference>
<dbReference type="PRINTS" id="PR00062">
    <property type="entry name" value="RIBOSOMALL20"/>
</dbReference>
<dbReference type="SUPFAM" id="SSF74731">
    <property type="entry name" value="Ribosomal protein L20"/>
    <property type="match status" value="1"/>
</dbReference>
<dbReference type="PROSITE" id="PS00937">
    <property type="entry name" value="RIBOSOMAL_L20"/>
    <property type="match status" value="1"/>
</dbReference>
<sequence>MARVKRGVIARARHKKILKQAKGYYGARSRVYRVAFQAVIKAGQYAYRDRRQRKRQFRQLWIARINAAARQNGISYSKFINGLKKASVEIDRKILADIAVFDKVAFTALVEKAKAALA</sequence>
<organism>
    <name type="scientific">Escherichia coli (strain SMS-3-5 / SECEC)</name>
    <dbReference type="NCBI Taxonomy" id="439855"/>
    <lineage>
        <taxon>Bacteria</taxon>
        <taxon>Pseudomonadati</taxon>
        <taxon>Pseudomonadota</taxon>
        <taxon>Gammaproteobacteria</taxon>
        <taxon>Enterobacterales</taxon>
        <taxon>Enterobacteriaceae</taxon>
        <taxon>Escherichia</taxon>
    </lineage>
</organism>
<keyword id="KW-0687">Ribonucleoprotein</keyword>
<keyword id="KW-0689">Ribosomal protein</keyword>
<keyword id="KW-0694">RNA-binding</keyword>
<keyword id="KW-0699">rRNA-binding</keyword>
<proteinExistence type="inferred from homology"/>
<evidence type="ECO:0000255" key="1">
    <source>
        <dbReference type="HAMAP-Rule" id="MF_00382"/>
    </source>
</evidence>
<evidence type="ECO:0000305" key="2"/>
<reference key="1">
    <citation type="journal article" date="2008" name="J. Bacteriol.">
        <title>Insights into the environmental resistance gene pool from the genome sequence of the multidrug-resistant environmental isolate Escherichia coli SMS-3-5.</title>
        <authorList>
            <person name="Fricke W.F."/>
            <person name="Wright M.S."/>
            <person name="Lindell A.H."/>
            <person name="Harkins D.M."/>
            <person name="Baker-Austin C."/>
            <person name="Ravel J."/>
            <person name="Stepanauskas R."/>
        </authorList>
    </citation>
    <scope>NUCLEOTIDE SEQUENCE [LARGE SCALE GENOMIC DNA]</scope>
    <source>
        <strain>SMS-3-5 / SECEC</strain>
    </source>
</reference>
<accession>B1LE15</accession>
<feature type="chain" id="PRO_1000122315" description="Large ribosomal subunit protein bL20">
    <location>
        <begin position="1"/>
        <end position="118"/>
    </location>
</feature>